<name>MURE_XYLFT</name>
<sequence>MRRSMPLAQLLPDIPQARDVVISGLVMDSREVQPGDAFVAVAGFGVHGLCFIEDACARGAVAILFEPPAPQGVSVPDGAIAVHGLRARLGAMADRFHGHPSQAMTMVGVTGTNGKTSTVQLLAQAWHRLGVRSATCGTLGVGLYDQLVPTGFTTPLVLQLHQCLGQLRDDGAQAVAMEVSSHALDQGRVDGVHYDVAVFTNLTRDHLDYHGDMEHYGEAKARLFAHQDVQAAVINVDDLFGLRLLHGLANGVRRVGVSVCGHTDADVMAQHLSLNLQGIGFDLVIGADRAPVRSPLMGRFNVDNLLTVAGVLYALDYALSEIAAVLSTLRPIHGRMNRLGGQDGQPVVVVDYAHTPDALGQVLSSLSSHVCGRLICVFGCGGERDRGKRSQMAVIAESNADVVLVTDDNPRGEDGDGIVADILAGFVRPNLVKVQRDRSAAIAAAIGIASAGDVVLIAGKGHERYQEVAGVRHPFDDTEVAMRVLAAMSAQETVR</sequence>
<reference key="1">
    <citation type="journal article" date="2003" name="J. Bacteriol.">
        <title>Comparative analyses of the complete genome sequences of Pierce's disease and citrus variegated chlorosis strains of Xylella fastidiosa.</title>
        <authorList>
            <person name="Van Sluys M.A."/>
            <person name="de Oliveira M.C."/>
            <person name="Monteiro-Vitorello C.B."/>
            <person name="Miyaki C.Y."/>
            <person name="Furlan L.R."/>
            <person name="Camargo L.E.A."/>
            <person name="da Silva A.C.R."/>
            <person name="Moon D.H."/>
            <person name="Takita M.A."/>
            <person name="Lemos E.G.M."/>
            <person name="Machado M.A."/>
            <person name="Ferro M.I.T."/>
            <person name="da Silva F.R."/>
            <person name="Goldman M.H.S."/>
            <person name="Goldman G.H."/>
            <person name="Lemos M.V.F."/>
            <person name="El-Dorry H."/>
            <person name="Tsai S.M."/>
            <person name="Carrer H."/>
            <person name="Carraro D.M."/>
            <person name="de Oliveira R.C."/>
            <person name="Nunes L.R."/>
            <person name="Siqueira W.J."/>
            <person name="Coutinho L.L."/>
            <person name="Kimura E.T."/>
            <person name="Ferro E.S."/>
            <person name="Harakava R."/>
            <person name="Kuramae E.E."/>
            <person name="Marino C.L."/>
            <person name="Giglioti E."/>
            <person name="Abreu I.L."/>
            <person name="Alves L.M.C."/>
            <person name="do Amaral A.M."/>
            <person name="Baia G.S."/>
            <person name="Blanco S.R."/>
            <person name="Brito M.S."/>
            <person name="Cannavan F.S."/>
            <person name="Celestino A.V."/>
            <person name="da Cunha A.F."/>
            <person name="Fenille R.C."/>
            <person name="Ferro J.A."/>
            <person name="Formighieri E.F."/>
            <person name="Kishi L.T."/>
            <person name="Leoni S.G."/>
            <person name="Oliveira A.R."/>
            <person name="Rosa V.E. Jr."/>
            <person name="Sassaki F.T."/>
            <person name="Sena J.A.D."/>
            <person name="de Souza A.A."/>
            <person name="Truffi D."/>
            <person name="Tsukumo F."/>
            <person name="Yanai G.M."/>
            <person name="Zaros L.G."/>
            <person name="Civerolo E.L."/>
            <person name="Simpson A.J.G."/>
            <person name="Almeida N.F. Jr."/>
            <person name="Setubal J.C."/>
            <person name="Kitajima J.P."/>
        </authorList>
    </citation>
    <scope>NUCLEOTIDE SEQUENCE [LARGE SCALE GENOMIC DNA]</scope>
    <source>
        <strain>Temecula1 / ATCC 700964</strain>
    </source>
</reference>
<feature type="chain" id="PRO_0000101976" description="UDP-N-acetylmuramoyl-L-alanyl-D-glutamate--2,6-diaminopimelate ligase">
    <location>
        <begin position="1"/>
        <end position="495"/>
    </location>
</feature>
<feature type="short sequence motif" description="Meso-diaminopimelate recognition motif">
    <location>
        <begin position="408"/>
        <end position="411"/>
    </location>
</feature>
<feature type="binding site" evidence="1">
    <location>
        <position position="29"/>
    </location>
    <ligand>
        <name>UDP-N-acetyl-alpha-D-muramoyl-L-alanyl-D-glutamate</name>
        <dbReference type="ChEBI" id="CHEBI:83900"/>
    </ligand>
</feature>
<feature type="binding site" evidence="1">
    <location>
        <begin position="111"/>
        <end position="117"/>
    </location>
    <ligand>
        <name>ATP</name>
        <dbReference type="ChEBI" id="CHEBI:30616"/>
    </ligand>
</feature>
<feature type="binding site" evidence="1">
    <location>
        <begin position="153"/>
        <end position="154"/>
    </location>
    <ligand>
        <name>UDP-N-acetyl-alpha-D-muramoyl-L-alanyl-D-glutamate</name>
        <dbReference type="ChEBI" id="CHEBI:83900"/>
    </ligand>
</feature>
<feature type="binding site" evidence="1">
    <location>
        <position position="180"/>
    </location>
    <ligand>
        <name>UDP-N-acetyl-alpha-D-muramoyl-L-alanyl-D-glutamate</name>
        <dbReference type="ChEBI" id="CHEBI:83900"/>
    </ligand>
</feature>
<feature type="binding site" evidence="1">
    <location>
        <position position="186"/>
    </location>
    <ligand>
        <name>UDP-N-acetyl-alpha-D-muramoyl-L-alanyl-D-glutamate</name>
        <dbReference type="ChEBI" id="CHEBI:83900"/>
    </ligand>
</feature>
<feature type="binding site" evidence="1">
    <location>
        <position position="188"/>
    </location>
    <ligand>
        <name>UDP-N-acetyl-alpha-D-muramoyl-L-alanyl-D-glutamate</name>
        <dbReference type="ChEBI" id="CHEBI:83900"/>
    </ligand>
</feature>
<feature type="binding site" evidence="1">
    <location>
        <position position="384"/>
    </location>
    <ligand>
        <name>meso-2,6-diaminopimelate</name>
        <dbReference type="ChEBI" id="CHEBI:57791"/>
    </ligand>
</feature>
<feature type="binding site" evidence="1">
    <location>
        <begin position="408"/>
        <end position="411"/>
    </location>
    <ligand>
        <name>meso-2,6-diaminopimelate</name>
        <dbReference type="ChEBI" id="CHEBI:57791"/>
    </ligand>
</feature>
<feature type="binding site" evidence="1">
    <location>
        <position position="459"/>
    </location>
    <ligand>
        <name>meso-2,6-diaminopimelate</name>
        <dbReference type="ChEBI" id="CHEBI:57791"/>
    </ligand>
</feature>
<feature type="binding site" evidence="1">
    <location>
        <position position="463"/>
    </location>
    <ligand>
        <name>meso-2,6-diaminopimelate</name>
        <dbReference type="ChEBI" id="CHEBI:57791"/>
    </ligand>
</feature>
<feature type="modified residue" description="N6-carboxylysine" evidence="1">
    <location>
        <position position="220"/>
    </location>
</feature>
<organism>
    <name type="scientific">Xylella fastidiosa (strain Temecula1 / ATCC 700964)</name>
    <dbReference type="NCBI Taxonomy" id="183190"/>
    <lineage>
        <taxon>Bacteria</taxon>
        <taxon>Pseudomonadati</taxon>
        <taxon>Pseudomonadota</taxon>
        <taxon>Gammaproteobacteria</taxon>
        <taxon>Lysobacterales</taxon>
        <taxon>Lysobacteraceae</taxon>
        <taxon>Xylella</taxon>
    </lineage>
</organism>
<comment type="function">
    <text evidence="1">Catalyzes the addition of meso-diaminopimelic acid to the nucleotide precursor UDP-N-acetylmuramoyl-L-alanyl-D-glutamate (UMAG) in the biosynthesis of bacterial cell-wall peptidoglycan.</text>
</comment>
<comment type="catalytic activity">
    <reaction evidence="1">
        <text>UDP-N-acetyl-alpha-D-muramoyl-L-alanyl-D-glutamate + meso-2,6-diaminopimelate + ATP = UDP-N-acetyl-alpha-D-muramoyl-L-alanyl-gamma-D-glutamyl-meso-2,6-diaminopimelate + ADP + phosphate + H(+)</text>
        <dbReference type="Rhea" id="RHEA:23676"/>
        <dbReference type="ChEBI" id="CHEBI:15378"/>
        <dbReference type="ChEBI" id="CHEBI:30616"/>
        <dbReference type="ChEBI" id="CHEBI:43474"/>
        <dbReference type="ChEBI" id="CHEBI:57791"/>
        <dbReference type="ChEBI" id="CHEBI:83900"/>
        <dbReference type="ChEBI" id="CHEBI:83905"/>
        <dbReference type="ChEBI" id="CHEBI:456216"/>
        <dbReference type="EC" id="6.3.2.13"/>
    </reaction>
</comment>
<comment type="cofactor">
    <cofactor evidence="1">
        <name>Mg(2+)</name>
        <dbReference type="ChEBI" id="CHEBI:18420"/>
    </cofactor>
</comment>
<comment type="pathway">
    <text evidence="1">Cell wall biogenesis; peptidoglycan biosynthesis.</text>
</comment>
<comment type="subcellular location">
    <subcellularLocation>
        <location evidence="1">Cytoplasm</location>
    </subcellularLocation>
</comment>
<comment type="PTM">
    <text evidence="1">Carboxylation is probably crucial for Mg(2+) binding and, consequently, for the gamma-phosphate positioning of ATP.</text>
</comment>
<comment type="similarity">
    <text evidence="1">Belongs to the MurCDEF family. MurE subfamily.</text>
</comment>
<evidence type="ECO:0000255" key="1">
    <source>
        <dbReference type="HAMAP-Rule" id="MF_00208"/>
    </source>
</evidence>
<dbReference type="EC" id="6.3.2.13" evidence="1"/>
<dbReference type="EMBL" id="AE009442">
    <property type="protein sequence ID" value="AAO29702.1"/>
    <property type="molecule type" value="Genomic_DNA"/>
</dbReference>
<dbReference type="RefSeq" id="WP_011098288.1">
    <property type="nucleotide sequence ID" value="NC_004556.1"/>
</dbReference>
<dbReference type="SMR" id="Q87AF5"/>
<dbReference type="KEGG" id="xft:PD_1870"/>
<dbReference type="HOGENOM" id="CLU_022291_3_2_6"/>
<dbReference type="UniPathway" id="UPA00219"/>
<dbReference type="Proteomes" id="UP000002516">
    <property type="component" value="Chromosome"/>
</dbReference>
<dbReference type="GO" id="GO:0005737">
    <property type="term" value="C:cytoplasm"/>
    <property type="evidence" value="ECO:0007669"/>
    <property type="project" value="UniProtKB-SubCell"/>
</dbReference>
<dbReference type="GO" id="GO:0005524">
    <property type="term" value="F:ATP binding"/>
    <property type="evidence" value="ECO:0007669"/>
    <property type="project" value="UniProtKB-UniRule"/>
</dbReference>
<dbReference type="GO" id="GO:0000287">
    <property type="term" value="F:magnesium ion binding"/>
    <property type="evidence" value="ECO:0007669"/>
    <property type="project" value="UniProtKB-UniRule"/>
</dbReference>
<dbReference type="GO" id="GO:0008765">
    <property type="term" value="F:UDP-N-acetylmuramoylalanyl-D-glutamate-2,6-diaminopimelate ligase activity"/>
    <property type="evidence" value="ECO:0007669"/>
    <property type="project" value="UniProtKB-UniRule"/>
</dbReference>
<dbReference type="GO" id="GO:0051301">
    <property type="term" value="P:cell division"/>
    <property type="evidence" value="ECO:0007669"/>
    <property type="project" value="UniProtKB-KW"/>
</dbReference>
<dbReference type="GO" id="GO:0071555">
    <property type="term" value="P:cell wall organization"/>
    <property type="evidence" value="ECO:0007669"/>
    <property type="project" value="UniProtKB-KW"/>
</dbReference>
<dbReference type="GO" id="GO:0009252">
    <property type="term" value="P:peptidoglycan biosynthetic process"/>
    <property type="evidence" value="ECO:0007669"/>
    <property type="project" value="UniProtKB-UniRule"/>
</dbReference>
<dbReference type="GO" id="GO:0008360">
    <property type="term" value="P:regulation of cell shape"/>
    <property type="evidence" value="ECO:0007669"/>
    <property type="project" value="UniProtKB-KW"/>
</dbReference>
<dbReference type="Gene3D" id="3.90.190.20">
    <property type="entry name" value="Mur ligase, C-terminal domain"/>
    <property type="match status" value="1"/>
</dbReference>
<dbReference type="Gene3D" id="3.40.1190.10">
    <property type="entry name" value="Mur-like, catalytic domain"/>
    <property type="match status" value="1"/>
</dbReference>
<dbReference type="Gene3D" id="3.40.1390.10">
    <property type="entry name" value="MurE/MurF, N-terminal domain"/>
    <property type="match status" value="1"/>
</dbReference>
<dbReference type="HAMAP" id="MF_00208">
    <property type="entry name" value="MurE"/>
    <property type="match status" value="1"/>
</dbReference>
<dbReference type="InterPro" id="IPR036565">
    <property type="entry name" value="Mur-like_cat_sf"/>
</dbReference>
<dbReference type="InterPro" id="IPR004101">
    <property type="entry name" value="Mur_ligase_C"/>
</dbReference>
<dbReference type="InterPro" id="IPR036615">
    <property type="entry name" value="Mur_ligase_C_dom_sf"/>
</dbReference>
<dbReference type="InterPro" id="IPR013221">
    <property type="entry name" value="Mur_ligase_cen"/>
</dbReference>
<dbReference type="InterPro" id="IPR000713">
    <property type="entry name" value="Mur_ligase_N"/>
</dbReference>
<dbReference type="InterPro" id="IPR035911">
    <property type="entry name" value="MurE/MurF_N"/>
</dbReference>
<dbReference type="InterPro" id="IPR005761">
    <property type="entry name" value="UDP-N-AcMur-Glu-dNH2Pim_ligase"/>
</dbReference>
<dbReference type="NCBIfam" id="TIGR01085">
    <property type="entry name" value="murE"/>
    <property type="match status" value="1"/>
</dbReference>
<dbReference type="NCBIfam" id="NF001124">
    <property type="entry name" value="PRK00139.1-2"/>
    <property type="match status" value="1"/>
</dbReference>
<dbReference type="NCBIfam" id="NF001126">
    <property type="entry name" value="PRK00139.1-4"/>
    <property type="match status" value="1"/>
</dbReference>
<dbReference type="PANTHER" id="PTHR23135">
    <property type="entry name" value="MUR LIGASE FAMILY MEMBER"/>
    <property type="match status" value="1"/>
</dbReference>
<dbReference type="PANTHER" id="PTHR23135:SF4">
    <property type="entry name" value="UDP-N-ACETYLMURAMOYL-L-ALANYL-D-GLUTAMATE--2,6-DIAMINOPIMELATE LIGASE MURE HOMOLOG, CHLOROPLASTIC"/>
    <property type="match status" value="1"/>
</dbReference>
<dbReference type="Pfam" id="PF01225">
    <property type="entry name" value="Mur_ligase"/>
    <property type="match status" value="1"/>
</dbReference>
<dbReference type="Pfam" id="PF02875">
    <property type="entry name" value="Mur_ligase_C"/>
    <property type="match status" value="1"/>
</dbReference>
<dbReference type="Pfam" id="PF08245">
    <property type="entry name" value="Mur_ligase_M"/>
    <property type="match status" value="1"/>
</dbReference>
<dbReference type="SUPFAM" id="SSF53623">
    <property type="entry name" value="MurD-like peptide ligases, catalytic domain"/>
    <property type="match status" value="1"/>
</dbReference>
<dbReference type="SUPFAM" id="SSF53244">
    <property type="entry name" value="MurD-like peptide ligases, peptide-binding domain"/>
    <property type="match status" value="1"/>
</dbReference>
<dbReference type="SUPFAM" id="SSF63418">
    <property type="entry name" value="MurE/MurF N-terminal domain"/>
    <property type="match status" value="1"/>
</dbReference>
<protein>
    <recommendedName>
        <fullName evidence="1">UDP-N-acetylmuramoyl-L-alanyl-D-glutamate--2,6-diaminopimelate ligase</fullName>
        <ecNumber evidence="1">6.3.2.13</ecNumber>
    </recommendedName>
    <alternativeName>
        <fullName evidence="1">Meso-A2pm-adding enzyme</fullName>
    </alternativeName>
    <alternativeName>
        <fullName evidence="1">Meso-diaminopimelate-adding enzyme</fullName>
    </alternativeName>
    <alternativeName>
        <fullName evidence="1">UDP-MurNAc-L-Ala-D-Glu:meso-diaminopimelate ligase</fullName>
    </alternativeName>
    <alternativeName>
        <fullName evidence="1">UDP-MurNAc-tripeptide synthetase</fullName>
    </alternativeName>
    <alternativeName>
        <fullName evidence="1">UDP-N-acetylmuramyl-tripeptide synthetase</fullName>
    </alternativeName>
</protein>
<gene>
    <name evidence="1" type="primary">murE</name>
    <name type="ordered locus">PD_1870</name>
</gene>
<proteinExistence type="inferred from homology"/>
<accession>Q87AF5</accession>
<keyword id="KW-0067">ATP-binding</keyword>
<keyword id="KW-0131">Cell cycle</keyword>
<keyword id="KW-0132">Cell division</keyword>
<keyword id="KW-0133">Cell shape</keyword>
<keyword id="KW-0961">Cell wall biogenesis/degradation</keyword>
<keyword id="KW-0963">Cytoplasm</keyword>
<keyword id="KW-0436">Ligase</keyword>
<keyword id="KW-0460">Magnesium</keyword>
<keyword id="KW-0547">Nucleotide-binding</keyword>
<keyword id="KW-0573">Peptidoglycan synthesis</keyword>
<keyword id="KW-1185">Reference proteome</keyword>